<feature type="chain" id="PRO_1000018185" description="Tryptophan synthase alpha chain">
    <location>
        <begin position="1"/>
        <end position="267"/>
    </location>
</feature>
<feature type="active site" description="Proton acceptor" evidence="1">
    <location>
        <position position="49"/>
    </location>
</feature>
<feature type="active site" description="Proton acceptor" evidence="1">
    <location>
        <position position="60"/>
    </location>
</feature>
<sequence>MSRIGQVFAEKRSRGEKALIAYTMGGDPNLTFSLEIIKTLAAAGADLIEVGLPFSDPLADGPVIQRAGQRALAAGSGPEEVLALIAAARQELSLPLVIMSYLNPILQIGVDEFLRRAAGAGADGLIIPDLPVEEGEEIRVSAAGYGLDLIPLVAPTTGQKRLEKIVGQASGFIYCVSVTGVTGARDSLPAEVISLLQNVKKLTELPVCLGFGIGKPEQIAYIKDYCDGVIVGSALVEIIENYVQNRMEKDKVLELIATKVQTLKSVS</sequence>
<gene>
    <name evidence="1" type="primary">trpA</name>
    <name type="ordered locus">CHY_1581</name>
</gene>
<proteinExistence type="inferred from homology"/>
<organism>
    <name type="scientific">Carboxydothermus hydrogenoformans (strain ATCC BAA-161 / DSM 6008 / Z-2901)</name>
    <dbReference type="NCBI Taxonomy" id="246194"/>
    <lineage>
        <taxon>Bacteria</taxon>
        <taxon>Bacillati</taxon>
        <taxon>Bacillota</taxon>
        <taxon>Clostridia</taxon>
        <taxon>Thermoanaerobacterales</taxon>
        <taxon>Thermoanaerobacteraceae</taxon>
        <taxon>Carboxydothermus</taxon>
    </lineage>
</organism>
<name>TRPA_CARHZ</name>
<protein>
    <recommendedName>
        <fullName evidence="1">Tryptophan synthase alpha chain</fullName>
        <ecNumber evidence="1">4.2.1.20</ecNumber>
    </recommendedName>
</protein>
<evidence type="ECO:0000255" key="1">
    <source>
        <dbReference type="HAMAP-Rule" id="MF_00131"/>
    </source>
</evidence>
<comment type="function">
    <text evidence="1">The alpha subunit is responsible for the aldol cleavage of indoleglycerol phosphate to indole and glyceraldehyde 3-phosphate.</text>
</comment>
<comment type="catalytic activity">
    <reaction evidence="1">
        <text>(1S,2R)-1-C-(indol-3-yl)glycerol 3-phosphate + L-serine = D-glyceraldehyde 3-phosphate + L-tryptophan + H2O</text>
        <dbReference type="Rhea" id="RHEA:10532"/>
        <dbReference type="ChEBI" id="CHEBI:15377"/>
        <dbReference type="ChEBI" id="CHEBI:33384"/>
        <dbReference type="ChEBI" id="CHEBI:57912"/>
        <dbReference type="ChEBI" id="CHEBI:58866"/>
        <dbReference type="ChEBI" id="CHEBI:59776"/>
        <dbReference type="EC" id="4.2.1.20"/>
    </reaction>
</comment>
<comment type="pathway">
    <text evidence="1">Amino-acid biosynthesis; L-tryptophan biosynthesis; L-tryptophan from chorismate: step 5/5.</text>
</comment>
<comment type="subunit">
    <text evidence="1">Tetramer of two alpha and two beta chains.</text>
</comment>
<comment type="similarity">
    <text evidence="1">Belongs to the TrpA family.</text>
</comment>
<accession>Q3ABS4</accession>
<keyword id="KW-0028">Amino-acid biosynthesis</keyword>
<keyword id="KW-0057">Aromatic amino acid biosynthesis</keyword>
<keyword id="KW-0456">Lyase</keyword>
<keyword id="KW-1185">Reference proteome</keyword>
<keyword id="KW-0822">Tryptophan biosynthesis</keyword>
<reference key="1">
    <citation type="journal article" date="2005" name="PLoS Genet.">
        <title>Life in hot carbon monoxide: the complete genome sequence of Carboxydothermus hydrogenoformans Z-2901.</title>
        <authorList>
            <person name="Wu M."/>
            <person name="Ren Q."/>
            <person name="Durkin A.S."/>
            <person name="Daugherty S.C."/>
            <person name="Brinkac L.M."/>
            <person name="Dodson R.J."/>
            <person name="Madupu R."/>
            <person name="Sullivan S.A."/>
            <person name="Kolonay J.F."/>
            <person name="Nelson W.C."/>
            <person name="Tallon L.J."/>
            <person name="Jones K.M."/>
            <person name="Ulrich L.E."/>
            <person name="Gonzalez J.M."/>
            <person name="Zhulin I.B."/>
            <person name="Robb F.T."/>
            <person name="Eisen J.A."/>
        </authorList>
    </citation>
    <scope>NUCLEOTIDE SEQUENCE [LARGE SCALE GENOMIC DNA]</scope>
    <source>
        <strain>ATCC BAA-161 / DSM 6008 / Z-2901</strain>
    </source>
</reference>
<dbReference type="EC" id="4.2.1.20" evidence="1"/>
<dbReference type="EMBL" id="CP000141">
    <property type="protein sequence ID" value="ABB15206.1"/>
    <property type="molecule type" value="Genomic_DNA"/>
</dbReference>
<dbReference type="RefSeq" id="WP_011344485.1">
    <property type="nucleotide sequence ID" value="NC_007503.1"/>
</dbReference>
<dbReference type="SMR" id="Q3ABS4"/>
<dbReference type="FunCoup" id="Q3ABS4">
    <property type="interactions" value="341"/>
</dbReference>
<dbReference type="STRING" id="246194.CHY_1581"/>
<dbReference type="KEGG" id="chy:CHY_1581"/>
<dbReference type="eggNOG" id="COG0159">
    <property type="taxonomic scope" value="Bacteria"/>
</dbReference>
<dbReference type="HOGENOM" id="CLU_016734_0_2_9"/>
<dbReference type="InParanoid" id="Q3ABS4"/>
<dbReference type="OrthoDB" id="9804578at2"/>
<dbReference type="UniPathway" id="UPA00035">
    <property type="reaction ID" value="UER00044"/>
</dbReference>
<dbReference type="Proteomes" id="UP000002706">
    <property type="component" value="Chromosome"/>
</dbReference>
<dbReference type="GO" id="GO:0005829">
    <property type="term" value="C:cytosol"/>
    <property type="evidence" value="ECO:0007669"/>
    <property type="project" value="TreeGrafter"/>
</dbReference>
<dbReference type="GO" id="GO:0004834">
    <property type="term" value="F:tryptophan synthase activity"/>
    <property type="evidence" value="ECO:0007669"/>
    <property type="project" value="UniProtKB-UniRule"/>
</dbReference>
<dbReference type="CDD" id="cd04724">
    <property type="entry name" value="Tryptophan_synthase_alpha"/>
    <property type="match status" value="1"/>
</dbReference>
<dbReference type="FunFam" id="3.20.20.70:FF:000037">
    <property type="entry name" value="Tryptophan synthase alpha chain"/>
    <property type="match status" value="1"/>
</dbReference>
<dbReference type="Gene3D" id="3.20.20.70">
    <property type="entry name" value="Aldolase class I"/>
    <property type="match status" value="1"/>
</dbReference>
<dbReference type="HAMAP" id="MF_00131">
    <property type="entry name" value="Trp_synth_alpha"/>
    <property type="match status" value="1"/>
</dbReference>
<dbReference type="InterPro" id="IPR013785">
    <property type="entry name" value="Aldolase_TIM"/>
</dbReference>
<dbReference type="InterPro" id="IPR011060">
    <property type="entry name" value="RibuloseP-bd_barrel"/>
</dbReference>
<dbReference type="InterPro" id="IPR018204">
    <property type="entry name" value="Trp_synthase_alpha_AS"/>
</dbReference>
<dbReference type="InterPro" id="IPR002028">
    <property type="entry name" value="Trp_synthase_suA"/>
</dbReference>
<dbReference type="NCBIfam" id="TIGR00262">
    <property type="entry name" value="trpA"/>
    <property type="match status" value="1"/>
</dbReference>
<dbReference type="PANTHER" id="PTHR43406:SF1">
    <property type="entry name" value="TRYPTOPHAN SYNTHASE ALPHA CHAIN, CHLOROPLASTIC"/>
    <property type="match status" value="1"/>
</dbReference>
<dbReference type="PANTHER" id="PTHR43406">
    <property type="entry name" value="TRYPTOPHAN SYNTHASE, ALPHA CHAIN"/>
    <property type="match status" value="1"/>
</dbReference>
<dbReference type="Pfam" id="PF00290">
    <property type="entry name" value="Trp_syntA"/>
    <property type="match status" value="1"/>
</dbReference>
<dbReference type="SUPFAM" id="SSF51366">
    <property type="entry name" value="Ribulose-phoshate binding barrel"/>
    <property type="match status" value="1"/>
</dbReference>
<dbReference type="PROSITE" id="PS00167">
    <property type="entry name" value="TRP_SYNTHASE_ALPHA"/>
    <property type="match status" value="1"/>
</dbReference>